<name>BURP2_ORYSJ</name>
<sequence length="287" mass="29842">MARSLAALLLLLVAAAGASHAASPAEMYWKIALPTSPMPGAIRDLISPASSAASASKDKEDTVGSVFFLEKDLFPGSKMTLHFTRATAGAALLPRGRADSVPFASEKLPEILSQLSIPAGSPTADAMRSTLAVCEAARIASETAPKHKHYCATSLESMVELVASSLGTRDVHAVSTEVVNRAGPTPRQAYRVEAVRPVPVPGGDMVACHRMPYAYAVFGVHGIKGAAYTVTLAGADGTMAEAVAACHGDVDGHGVAVAEAYKRLGVAPGKVAVCHFLPQDDMLWVRN</sequence>
<gene>
    <name type="primary">BURP2</name>
    <name type="ordered locus">Os05g0217800</name>
    <name type="ordered locus">LOC_Os05g12640</name>
    <name type="ORF">OJ1076_H08.15</name>
    <name type="ORF">OSJNBb0012L23.4</name>
</gene>
<protein>
    <recommendedName>
        <fullName>BURP domain-containing protein 2</fullName>
        <shortName>OsBURP02</shortName>
    </recommendedName>
</protein>
<keyword id="KW-0025">Alternative splicing</keyword>
<keyword id="KW-1185">Reference proteome</keyword>
<keyword id="KW-0732">Signal</keyword>
<dbReference type="EMBL" id="AC108498">
    <property type="protein sequence ID" value="AAT47027.1"/>
    <property type="molecule type" value="Genomic_DNA"/>
</dbReference>
<dbReference type="EMBL" id="AC137001">
    <property type="protein sequence ID" value="AAV25278.1"/>
    <property type="molecule type" value="Genomic_DNA"/>
</dbReference>
<dbReference type="EMBL" id="AP008211">
    <property type="protein sequence ID" value="BAF16852.1"/>
    <property type="molecule type" value="Genomic_DNA"/>
</dbReference>
<dbReference type="EMBL" id="AP014961">
    <property type="protein sequence ID" value="BAS92843.1"/>
    <property type="molecule type" value="Genomic_DNA"/>
</dbReference>
<dbReference type="EMBL" id="AK067171">
    <property type="protein sequence ID" value="BAG90300.1"/>
    <property type="molecule type" value="mRNA"/>
</dbReference>
<dbReference type="EMBL" id="AK104232">
    <property type="protein sequence ID" value="BAG96528.1"/>
    <property type="molecule type" value="mRNA"/>
</dbReference>
<dbReference type="EMBL" id="AK104233">
    <property type="protein sequence ID" value="BAG96529.1"/>
    <property type="molecule type" value="mRNA"/>
</dbReference>
<dbReference type="EMBL" id="AK104234">
    <property type="protein sequence ID" value="BAG96530.1"/>
    <property type="molecule type" value="mRNA"/>
</dbReference>
<dbReference type="EMBL" id="AK104239">
    <property type="protein sequence ID" value="BAG96535.1"/>
    <property type="molecule type" value="mRNA"/>
</dbReference>
<dbReference type="EMBL" id="AK104402">
    <property type="protein sequence ID" value="BAG96651.1"/>
    <property type="molecule type" value="mRNA"/>
</dbReference>
<dbReference type="EMBL" id="AK104459">
    <property type="protein sequence ID" value="BAG96701.1"/>
    <property type="molecule type" value="mRNA"/>
</dbReference>
<dbReference type="EMBL" id="AK104491">
    <property type="protein sequence ID" value="BAG96725.1"/>
    <property type="molecule type" value="mRNA"/>
</dbReference>
<dbReference type="EMBL" id="AK104492">
    <property type="protein sequence ID" value="BAG96726.1"/>
    <property type="molecule type" value="mRNA"/>
</dbReference>
<dbReference type="EMBL" id="AK104493">
    <property type="protein sequence ID" value="BAG96727.1"/>
    <property type="molecule type" value="mRNA"/>
</dbReference>
<dbReference type="EMBL" id="AK104497">
    <property type="protein sequence ID" value="BAG96731.1"/>
    <property type="molecule type" value="mRNA"/>
</dbReference>
<dbReference type="EMBL" id="AK104506">
    <property type="protein sequence ID" value="BAG96739.1"/>
    <property type="molecule type" value="mRNA"/>
</dbReference>
<dbReference type="EMBL" id="AK104534">
    <property type="protein sequence ID" value="BAG96763.1"/>
    <property type="molecule type" value="mRNA"/>
</dbReference>
<dbReference type="EMBL" id="AK104540">
    <property type="protein sequence ID" value="BAG96768.1"/>
    <property type="molecule type" value="mRNA"/>
</dbReference>
<dbReference type="EMBL" id="AK104565">
    <property type="protein sequence ID" value="BAG96791.1"/>
    <property type="molecule type" value="mRNA"/>
</dbReference>
<dbReference type="EMBL" id="AK104566">
    <property type="protein sequence ID" value="BAG96792.1"/>
    <property type="molecule type" value="mRNA"/>
</dbReference>
<dbReference type="EMBL" id="AK104572">
    <property type="protein sequence ID" value="BAG96797.1"/>
    <property type="molecule type" value="mRNA"/>
</dbReference>
<dbReference type="EMBL" id="AK104579">
    <property type="protein sequence ID" value="BAG96804.1"/>
    <property type="molecule type" value="mRNA"/>
</dbReference>
<dbReference type="EMBL" id="AK104582">
    <property type="protein sequence ID" value="BAG96807.1"/>
    <property type="molecule type" value="mRNA"/>
</dbReference>
<dbReference type="EMBL" id="AK104584">
    <property type="protein sequence ID" value="BAG96809.1"/>
    <property type="molecule type" value="mRNA"/>
</dbReference>
<dbReference type="EMBL" id="AK104585">
    <property type="protein sequence ID" value="BAG96810.1"/>
    <property type="molecule type" value="mRNA"/>
</dbReference>
<dbReference type="EMBL" id="AK104604">
    <property type="protein sequence ID" value="BAG96825.1"/>
    <property type="molecule type" value="mRNA"/>
</dbReference>
<dbReference type="EMBL" id="AK104615">
    <property type="protein sequence ID" value="BAG96835.1"/>
    <property type="molecule type" value="mRNA"/>
</dbReference>
<dbReference type="EMBL" id="AK104616">
    <property type="protein sequence ID" value="BAG96836.1"/>
    <property type="molecule type" value="mRNA"/>
</dbReference>
<dbReference type="EMBL" id="AK104631">
    <property type="protein sequence ID" value="BAG96848.1"/>
    <property type="molecule type" value="mRNA"/>
</dbReference>
<dbReference type="EMBL" id="AK104640">
    <property type="protein sequence ID" value="BAG96854.1"/>
    <property type="molecule type" value="mRNA"/>
</dbReference>
<dbReference type="EMBL" id="AK105889">
    <property type="protein sequence ID" value="BAG97419.1"/>
    <property type="molecule type" value="mRNA"/>
</dbReference>
<dbReference type="EMBL" id="AK105894">
    <property type="protein sequence ID" value="BAG97421.1"/>
    <property type="molecule type" value="mRNA"/>
</dbReference>
<dbReference type="EMBL" id="AK106077">
    <property type="protein sequence ID" value="BAG97550.1"/>
    <property type="molecule type" value="mRNA"/>
</dbReference>
<dbReference type="EMBL" id="AK106086">
    <property type="protein sequence ID" value="BAG97557.1"/>
    <property type="molecule type" value="mRNA"/>
</dbReference>
<dbReference type="EMBL" id="AK106094">
    <property type="protein sequence ID" value="BAG97564.1"/>
    <property type="molecule type" value="mRNA"/>
</dbReference>
<dbReference type="EMBL" id="AK106097">
    <property type="protein sequence ID" value="BAG97567.1"/>
    <property type="molecule type" value="mRNA"/>
</dbReference>
<dbReference type="EMBL" id="AK106120">
    <property type="protein sequence ID" value="BAG97584.1"/>
    <property type="molecule type" value="mRNA"/>
</dbReference>
<dbReference type="EMBL" id="AK106148">
    <property type="protein sequence ID" value="BAG97600.1"/>
    <property type="molecule type" value="mRNA"/>
</dbReference>
<dbReference type="EMBL" id="AK106187">
    <property type="protein sequence ID" value="BAG97626.1"/>
    <property type="molecule type" value="mRNA"/>
</dbReference>
<dbReference type="EMBL" id="AK106191">
    <property type="protein sequence ID" value="BAG97630.1"/>
    <property type="molecule type" value="mRNA"/>
</dbReference>
<dbReference type="EMBL" id="AK106198">
    <property type="protein sequence ID" value="BAG97635.1"/>
    <property type="molecule type" value="mRNA"/>
</dbReference>
<dbReference type="EMBL" id="AK106205">
    <property type="protein sequence ID" value="BAG97639.1"/>
    <property type="molecule type" value="mRNA"/>
</dbReference>
<dbReference type="EMBL" id="AK109406">
    <property type="protein sequence ID" value="BAG98722.1"/>
    <property type="molecule type" value="mRNA"/>
</dbReference>
<dbReference type="EMBL" id="AK109410">
    <property type="protein sequence ID" value="BAG98725.1"/>
    <property type="molecule type" value="mRNA"/>
</dbReference>
<dbReference type="EMBL" id="AK109418">
    <property type="protein sequence ID" value="BAG98732.1"/>
    <property type="molecule type" value="mRNA"/>
</dbReference>
<dbReference type="EMBL" id="AK109419">
    <property type="protein sequence ID" value="BAG98733.1"/>
    <property type="molecule type" value="mRNA"/>
</dbReference>
<dbReference type="EMBL" id="AK119525">
    <property type="protein sequence ID" value="BAG99669.1"/>
    <property type="molecule type" value="mRNA"/>
</dbReference>
<dbReference type="EMBL" id="AK119526">
    <property type="protein sequence ID" value="BAG99670.1"/>
    <property type="molecule type" value="mRNA"/>
</dbReference>
<dbReference type="EMBL" id="AK119541">
    <property type="protein sequence ID" value="BAG99678.1"/>
    <property type="molecule type" value="mRNA"/>
</dbReference>
<dbReference type="EMBL" id="AK119549">
    <property type="protein sequence ID" value="BAG99685.1"/>
    <property type="molecule type" value="mRNA"/>
</dbReference>
<dbReference type="EMBL" id="AK119556">
    <property type="protein sequence ID" value="BAG99692.1"/>
    <property type="molecule type" value="mRNA"/>
</dbReference>
<dbReference type="RefSeq" id="XP_015639803.1">
    <property type="nucleotide sequence ID" value="XM_015784317.1"/>
</dbReference>
<dbReference type="SMR" id="Q6I5W0"/>
<dbReference type="FunCoup" id="Q6I5W0">
    <property type="interactions" value="3"/>
</dbReference>
<dbReference type="PaxDb" id="39947-Q6I5W0"/>
<dbReference type="EnsemblPlants" id="Os05t0217800-01">
    <molecule id="Q6I5W0-1"/>
    <property type="protein sequence ID" value="Os05t0217800-01"/>
    <property type="gene ID" value="Os05g0217800"/>
</dbReference>
<dbReference type="Gramene" id="Os05t0217800-01">
    <molecule id="Q6I5W0-1"/>
    <property type="protein sequence ID" value="Os05t0217800-01"/>
    <property type="gene ID" value="Os05g0217800"/>
</dbReference>
<dbReference type="KEGG" id="dosa:Os05g0217800"/>
<dbReference type="eggNOG" id="ENOG502QT2V">
    <property type="taxonomic scope" value="Eukaryota"/>
</dbReference>
<dbReference type="HOGENOM" id="CLU_011822_0_1_1"/>
<dbReference type="InParanoid" id="Q6I5W0"/>
<dbReference type="OMA" id="LYPGSKM"/>
<dbReference type="OrthoDB" id="678718at2759"/>
<dbReference type="Proteomes" id="UP000000763">
    <property type="component" value="Chromosome 5"/>
</dbReference>
<dbReference type="Proteomes" id="UP000059680">
    <property type="component" value="Chromosome 5"/>
</dbReference>
<dbReference type="ExpressionAtlas" id="Q6I5W0">
    <property type="expression patterns" value="baseline and differential"/>
</dbReference>
<dbReference type="InterPro" id="IPR044816">
    <property type="entry name" value="BURP"/>
</dbReference>
<dbReference type="InterPro" id="IPR004873">
    <property type="entry name" value="BURP_dom"/>
</dbReference>
<dbReference type="PANTHER" id="PTHR31236">
    <property type="entry name" value="BURP DOMAIN PROTEIN USPL1-LIKE"/>
    <property type="match status" value="1"/>
</dbReference>
<dbReference type="PANTHER" id="PTHR31236:SF31">
    <property type="entry name" value="BURP DOMAIN-CONTAINING PROTEIN 7"/>
    <property type="match status" value="1"/>
</dbReference>
<dbReference type="Pfam" id="PF03181">
    <property type="entry name" value="BURP"/>
    <property type="match status" value="1"/>
</dbReference>
<dbReference type="SMART" id="SM01045">
    <property type="entry name" value="BURP"/>
    <property type="match status" value="1"/>
</dbReference>
<dbReference type="PROSITE" id="PS51277">
    <property type="entry name" value="BURP"/>
    <property type="match status" value="1"/>
</dbReference>
<evidence type="ECO:0000255" key="1"/>
<evidence type="ECO:0000255" key="2">
    <source>
        <dbReference type="PROSITE-ProRule" id="PRU00604"/>
    </source>
</evidence>
<evidence type="ECO:0000269" key="3">
    <source>
    </source>
</evidence>
<evidence type="ECO:0000303" key="4">
    <source>
    </source>
</evidence>
<accession>Q6I5W0</accession>
<accession>B7EYW7</accession>
<comment type="alternative products">
    <event type="alternative splicing"/>
    <isoform>
        <id>Q6I5W0-1</id>
        <name>1</name>
        <sequence type="displayed"/>
    </isoform>
    <isoform>
        <id>Q6I5W0-2</id>
        <name>2</name>
        <sequence type="described" ref="VSP_037373"/>
    </isoform>
</comment>
<comment type="tissue specificity">
    <text evidence="3">Expressed in shoot.</text>
</comment>
<reference key="1">
    <citation type="journal article" date="2005" name="Mol. Genet. Genomics">
        <title>A fine physical map of the rice chromosome 5.</title>
        <authorList>
            <person name="Cheng C.-H."/>
            <person name="Chung M.C."/>
            <person name="Liu S.-M."/>
            <person name="Chen S.-K."/>
            <person name="Kao F.Y."/>
            <person name="Lin S.-J."/>
            <person name="Hsiao S.-H."/>
            <person name="Tseng I.C."/>
            <person name="Hsing Y.-I.C."/>
            <person name="Wu H.-P."/>
            <person name="Chen C.-S."/>
            <person name="Shaw J.-F."/>
            <person name="Wu J."/>
            <person name="Matsumoto T."/>
            <person name="Sasaki T."/>
            <person name="Chen H.-C."/>
            <person name="Chow T.-Y."/>
        </authorList>
    </citation>
    <scope>NUCLEOTIDE SEQUENCE [LARGE SCALE GENOMIC DNA]</scope>
    <source>
        <strain>cv. Nipponbare</strain>
    </source>
</reference>
<reference key="2">
    <citation type="journal article" date="2005" name="Nature">
        <title>The map-based sequence of the rice genome.</title>
        <authorList>
            <consortium name="International rice genome sequencing project (IRGSP)"/>
        </authorList>
    </citation>
    <scope>NUCLEOTIDE SEQUENCE [LARGE SCALE GENOMIC DNA]</scope>
    <source>
        <strain>cv. Nipponbare</strain>
    </source>
</reference>
<reference key="3">
    <citation type="journal article" date="2008" name="Nucleic Acids Res.">
        <title>The rice annotation project database (RAP-DB): 2008 update.</title>
        <authorList>
            <consortium name="The rice annotation project (RAP)"/>
        </authorList>
    </citation>
    <scope>GENOME REANNOTATION</scope>
    <source>
        <strain>cv. Nipponbare</strain>
    </source>
</reference>
<reference key="4">
    <citation type="journal article" date="2013" name="Rice">
        <title>Improvement of the Oryza sativa Nipponbare reference genome using next generation sequence and optical map data.</title>
        <authorList>
            <person name="Kawahara Y."/>
            <person name="de la Bastide M."/>
            <person name="Hamilton J.P."/>
            <person name="Kanamori H."/>
            <person name="McCombie W.R."/>
            <person name="Ouyang S."/>
            <person name="Schwartz D.C."/>
            <person name="Tanaka T."/>
            <person name="Wu J."/>
            <person name="Zhou S."/>
            <person name="Childs K.L."/>
            <person name="Davidson R.M."/>
            <person name="Lin H."/>
            <person name="Quesada-Ocampo L."/>
            <person name="Vaillancourt B."/>
            <person name="Sakai H."/>
            <person name="Lee S.S."/>
            <person name="Kim J."/>
            <person name="Numa H."/>
            <person name="Itoh T."/>
            <person name="Buell C.R."/>
            <person name="Matsumoto T."/>
        </authorList>
    </citation>
    <scope>GENOME REANNOTATION</scope>
    <source>
        <strain>cv. Nipponbare</strain>
    </source>
</reference>
<reference key="5">
    <citation type="journal article" date="2003" name="Science">
        <title>Collection, mapping, and annotation of over 28,000 cDNA clones from japonica rice.</title>
        <authorList>
            <consortium name="The rice full-length cDNA consortium"/>
        </authorList>
    </citation>
    <scope>NUCLEOTIDE SEQUENCE [LARGE SCALE MRNA] (ISOFORMS 1 AND 2)</scope>
    <source>
        <strain>cv. Nipponbare</strain>
    </source>
</reference>
<reference key="6">
    <citation type="journal article" date="2009" name="Planta">
        <title>Genome-wide identification of BURP domain-containing genes in rice reveals a gene family with diverse structures and responses to abiotic stresses.</title>
        <authorList>
            <person name="Ding X."/>
            <person name="Hou X."/>
            <person name="Xie K."/>
            <person name="Xiong L."/>
        </authorList>
    </citation>
    <scope>TISSUE SPECIFICITY</scope>
    <scope>GENE NOMENCLATURE</scope>
</reference>
<proteinExistence type="evidence at transcript level"/>
<organism>
    <name type="scientific">Oryza sativa subsp. japonica</name>
    <name type="common">Rice</name>
    <dbReference type="NCBI Taxonomy" id="39947"/>
    <lineage>
        <taxon>Eukaryota</taxon>
        <taxon>Viridiplantae</taxon>
        <taxon>Streptophyta</taxon>
        <taxon>Embryophyta</taxon>
        <taxon>Tracheophyta</taxon>
        <taxon>Spermatophyta</taxon>
        <taxon>Magnoliopsida</taxon>
        <taxon>Liliopsida</taxon>
        <taxon>Poales</taxon>
        <taxon>Poaceae</taxon>
        <taxon>BOP clade</taxon>
        <taxon>Oryzoideae</taxon>
        <taxon>Oryzeae</taxon>
        <taxon>Oryzinae</taxon>
        <taxon>Oryza</taxon>
        <taxon>Oryza sativa</taxon>
    </lineage>
</organism>
<feature type="signal peptide" evidence="1">
    <location>
        <begin position="1"/>
        <end position="21"/>
    </location>
</feature>
<feature type="chain" id="PRO_0000375829" description="BURP domain-containing protein 2">
    <location>
        <begin position="22"/>
        <end position="287"/>
    </location>
</feature>
<feature type="domain" description="BURP" evidence="2">
    <location>
        <begin position="67"/>
        <end position="287"/>
    </location>
</feature>
<feature type="splice variant" id="VSP_037373" description="In isoform 2." evidence="4">
    <location>
        <begin position="1"/>
        <end position="26"/>
    </location>
</feature>